<gene>
    <name evidence="1" type="primary">rlmN</name>
    <name type="ordered locus">CHAB381_1743</name>
</gene>
<dbReference type="EC" id="2.1.1.192" evidence="1"/>
<dbReference type="EMBL" id="CP000776">
    <property type="protein sequence ID" value="ABS50918.1"/>
    <property type="molecule type" value="Genomic_DNA"/>
</dbReference>
<dbReference type="RefSeq" id="WP_012109562.1">
    <property type="nucleotide sequence ID" value="NC_009714.1"/>
</dbReference>
<dbReference type="SMR" id="A7I414"/>
<dbReference type="STRING" id="360107.CHAB381_1743"/>
<dbReference type="KEGG" id="cha:CHAB381_1743"/>
<dbReference type="eggNOG" id="COG0820">
    <property type="taxonomic scope" value="Bacteria"/>
</dbReference>
<dbReference type="HOGENOM" id="CLU_029101_2_0_7"/>
<dbReference type="OrthoDB" id="9793973at2"/>
<dbReference type="Proteomes" id="UP000002407">
    <property type="component" value="Chromosome"/>
</dbReference>
<dbReference type="GO" id="GO:0005737">
    <property type="term" value="C:cytoplasm"/>
    <property type="evidence" value="ECO:0007669"/>
    <property type="project" value="UniProtKB-SubCell"/>
</dbReference>
<dbReference type="GO" id="GO:0051539">
    <property type="term" value="F:4 iron, 4 sulfur cluster binding"/>
    <property type="evidence" value="ECO:0007669"/>
    <property type="project" value="UniProtKB-UniRule"/>
</dbReference>
<dbReference type="GO" id="GO:0046872">
    <property type="term" value="F:metal ion binding"/>
    <property type="evidence" value="ECO:0007669"/>
    <property type="project" value="UniProtKB-KW"/>
</dbReference>
<dbReference type="GO" id="GO:0070040">
    <property type="term" value="F:rRNA (adenine(2503)-C2-)-methyltransferase activity"/>
    <property type="evidence" value="ECO:0007669"/>
    <property type="project" value="UniProtKB-UniRule"/>
</dbReference>
<dbReference type="GO" id="GO:0019843">
    <property type="term" value="F:rRNA binding"/>
    <property type="evidence" value="ECO:0007669"/>
    <property type="project" value="UniProtKB-UniRule"/>
</dbReference>
<dbReference type="GO" id="GO:0002935">
    <property type="term" value="F:tRNA (adenine(37)-C2)-methyltransferase activity"/>
    <property type="evidence" value="ECO:0007669"/>
    <property type="project" value="UniProtKB-UniRule"/>
</dbReference>
<dbReference type="GO" id="GO:0000049">
    <property type="term" value="F:tRNA binding"/>
    <property type="evidence" value="ECO:0007669"/>
    <property type="project" value="UniProtKB-UniRule"/>
</dbReference>
<dbReference type="GO" id="GO:0070475">
    <property type="term" value="P:rRNA base methylation"/>
    <property type="evidence" value="ECO:0007669"/>
    <property type="project" value="UniProtKB-UniRule"/>
</dbReference>
<dbReference type="GO" id="GO:0030488">
    <property type="term" value="P:tRNA methylation"/>
    <property type="evidence" value="ECO:0007669"/>
    <property type="project" value="UniProtKB-UniRule"/>
</dbReference>
<dbReference type="CDD" id="cd01335">
    <property type="entry name" value="Radical_SAM"/>
    <property type="match status" value="1"/>
</dbReference>
<dbReference type="FunFam" id="3.20.20.70:FF:000014">
    <property type="entry name" value="Probable dual-specificity RNA methyltransferase RlmN"/>
    <property type="match status" value="1"/>
</dbReference>
<dbReference type="Gene3D" id="1.10.150.530">
    <property type="match status" value="1"/>
</dbReference>
<dbReference type="Gene3D" id="3.20.20.70">
    <property type="entry name" value="Aldolase class I"/>
    <property type="match status" value="1"/>
</dbReference>
<dbReference type="HAMAP" id="MF_01849">
    <property type="entry name" value="RNA_methyltr_RlmN"/>
    <property type="match status" value="1"/>
</dbReference>
<dbReference type="InterPro" id="IPR013785">
    <property type="entry name" value="Aldolase_TIM"/>
</dbReference>
<dbReference type="InterPro" id="IPR040072">
    <property type="entry name" value="Methyltransferase_A"/>
</dbReference>
<dbReference type="InterPro" id="IPR048641">
    <property type="entry name" value="RlmN_N"/>
</dbReference>
<dbReference type="InterPro" id="IPR027492">
    <property type="entry name" value="RNA_MTrfase_RlmN"/>
</dbReference>
<dbReference type="InterPro" id="IPR004383">
    <property type="entry name" value="rRNA_lsu_MTrfase_RlmN/Cfr"/>
</dbReference>
<dbReference type="InterPro" id="IPR007197">
    <property type="entry name" value="rSAM"/>
</dbReference>
<dbReference type="NCBIfam" id="TIGR00048">
    <property type="entry name" value="rRNA_mod_RlmN"/>
    <property type="match status" value="1"/>
</dbReference>
<dbReference type="PANTHER" id="PTHR30544">
    <property type="entry name" value="23S RRNA METHYLTRANSFERASE"/>
    <property type="match status" value="1"/>
</dbReference>
<dbReference type="PANTHER" id="PTHR30544:SF5">
    <property type="entry name" value="RADICAL SAM CORE DOMAIN-CONTAINING PROTEIN"/>
    <property type="match status" value="1"/>
</dbReference>
<dbReference type="Pfam" id="PF04055">
    <property type="entry name" value="Radical_SAM"/>
    <property type="match status" value="1"/>
</dbReference>
<dbReference type="Pfam" id="PF21016">
    <property type="entry name" value="RlmN_N"/>
    <property type="match status" value="1"/>
</dbReference>
<dbReference type="PIRSF" id="PIRSF006004">
    <property type="entry name" value="CHP00048"/>
    <property type="match status" value="1"/>
</dbReference>
<dbReference type="SFLD" id="SFLDF00275">
    <property type="entry name" value="adenosine_C2_methyltransferase"/>
    <property type="match status" value="1"/>
</dbReference>
<dbReference type="SFLD" id="SFLDG01062">
    <property type="entry name" value="methyltransferase_(Class_A)"/>
    <property type="match status" value="1"/>
</dbReference>
<dbReference type="SUPFAM" id="SSF102114">
    <property type="entry name" value="Radical SAM enzymes"/>
    <property type="match status" value="1"/>
</dbReference>
<dbReference type="PROSITE" id="PS51918">
    <property type="entry name" value="RADICAL_SAM"/>
    <property type="match status" value="1"/>
</dbReference>
<feature type="chain" id="PRO_0000350093" description="Dual-specificity RNA methyltransferase RlmN">
    <location>
        <begin position="1"/>
        <end position="358"/>
    </location>
</feature>
<feature type="domain" description="Radical SAM core" evidence="2">
    <location>
        <begin position="105"/>
        <end position="338"/>
    </location>
</feature>
<feature type="active site" description="Proton acceptor" evidence="1">
    <location>
        <position position="86"/>
    </location>
</feature>
<feature type="active site" description="S-methylcysteine intermediate" evidence="1">
    <location>
        <position position="343"/>
    </location>
</feature>
<feature type="binding site" evidence="1">
    <location>
        <position position="119"/>
    </location>
    <ligand>
        <name>[4Fe-4S] cluster</name>
        <dbReference type="ChEBI" id="CHEBI:49883"/>
        <note>4Fe-4S-S-AdoMet</note>
    </ligand>
</feature>
<feature type="binding site" evidence="1">
    <location>
        <position position="123"/>
    </location>
    <ligand>
        <name>[4Fe-4S] cluster</name>
        <dbReference type="ChEBI" id="CHEBI:49883"/>
        <note>4Fe-4S-S-AdoMet</note>
    </ligand>
</feature>
<feature type="binding site" evidence="1">
    <location>
        <position position="126"/>
    </location>
    <ligand>
        <name>[4Fe-4S] cluster</name>
        <dbReference type="ChEBI" id="CHEBI:49883"/>
        <note>4Fe-4S-S-AdoMet</note>
    </ligand>
</feature>
<feature type="binding site" evidence="1">
    <location>
        <begin position="169"/>
        <end position="170"/>
    </location>
    <ligand>
        <name>S-adenosyl-L-methionine</name>
        <dbReference type="ChEBI" id="CHEBI:59789"/>
    </ligand>
</feature>
<feature type="binding site" evidence="1">
    <location>
        <position position="201"/>
    </location>
    <ligand>
        <name>S-adenosyl-L-methionine</name>
        <dbReference type="ChEBI" id="CHEBI:59789"/>
    </ligand>
</feature>
<feature type="binding site" evidence="1">
    <location>
        <begin position="224"/>
        <end position="226"/>
    </location>
    <ligand>
        <name>S-adenosyl-L-methionine</name>
        <dbReference type="ChEBI" id="CHEBI:59789"/>
    </ligand>
</feature>
<feature type="binding site" evidence="1">
    <location>
        <position position="300"/>
    </location>
    <ligand>
        <name>S-adenosyl-L-methionine</name>
        <dbReference type="ChEBI" id="CHEBI:59789"/>
    </ligand>
</feature>
<feature type="disulfide bond" description="(transient)" evidence="1">
    <location>
        <begin position="112"/>
        <end position="343"/>
    </location>
</feature>
<organism>
    <name type="scientific">Campylobacter hominis (strain ATCC BAA-381 / DSM 21671 / CCUG 45161 / LMG 19568 / NCTC 13146 / CH001A)</name>
    <dbReference type="NCBI Taxonomy" id="360107"/>
    <lineage>
        <taxon>Bacteria</taxon>
        <taxon>Pseudomonadati</taxon>
        <taxon>Campylobacterota</taxon>
        <taxon>Epsilonproteobacteria</taxon>
        <taxon>Campylobacterales</taxon>
        <taxon>Campylobacteraceae</taxon>
        <taxon>Campylobacter</taxon>
    </lineage>
</organism>
<keyword id="KW-0004">4Fe-4S</keyword>
<keyword id="KW-0963">Cytoplasm</keyword>
<keyword id="KW-1015">Disulfide bond</keyword>
<keyword id="KW-0408">Iron</keyword>
<keyword id="KW-0411">Iron-sulfur</keyword>
<keyword id="KW-0479">Metal-binding</keyword>
<keyword id="KW-0489">Methyltransferase</keyword>
<keyword id="KW-1185">Reference proteome</keyword>
<keyword id="KW-0698">rRNA processing</keyword>
<keyword id="KW-0949">S-adenosyl-L-methionine</keyword>
<keyword id="KW-0808">Transferase</keyword>
<keyword id="KW-0819">tRNA processing</keyword>
<proteinExistence type="inferred from homology"/>
<reference key="1">
    <citation type="submission" date="2007-07" db="EMBL/GenBank/DDBJ databases">
        <title>Complete genome sequence of Campylobacter hominis ATCC BAA-381, a commensal isolated from the human gastrointestinal tract.</title>
        <authorList>
            <person name="Fouts D.E."/>
            <person name="Mongodin E.F."/>
            <person name="Puiu D."/>
            <person name="Sebastian Y."/>
            <person name="Miller W.G."/>
            <person name="Mandrell R.E."/>
            <person name="Nelson K.E."/>
        </authorList>
    </citation>
    <scope>NUCLEOTIDE SEQUENCE [LARGE SCALE GENOMIC DNA]</scope>
    <source>
        <strain>ATCC BAA-381 / DSM 21671 / CCUG 45161 / LMG 19568 / NCTC 13146 / CH001A</strain>
    </source>
</reference>
<comment type="function">
    <text evidence="1">Specifically methylates position 2 of adenine 2503 in 23S rRNA and position 2 of adenine 37 in tRNAs. m2A2503 modification seems to play a crucial role in the proofreading step occurring at the peptidyl transferase center and thus would serve to optimize ribosomal fidelity.</text>
</comment>
<comment type="catalytic activity">
    <reaction evidence="1">
        <text>adenosine(2503) in 23S rRNA + 2 reduced [2Fe-2S]-[ferredoxin] + 2 S-adenosyl-L-methionine = 2-methyladenosine(2503) in 23S rRNA + 5'-deoxyadenosine + L-methionine + 2 oxidized [2Fe-2S]-[ferredoxin] + S-adenosyl-L-homocysteine</text>
        <dbReference type="Rhea" id="RHEA:42916"/>
        <dbReference type="Rhea" id="RHEA-COMP:10000"/>
        <dbReference type="Rhea" id="RHEA-COMP:10001"/>
        <dbReference type="Rhea" id="RHEA-COMP:10152"/>
        <dbReference type="Rhea" id="RHEA-COMP:10282"/>
        <dbReference type="ChEBI" id="CHEBI:17319"/>
        <dbReference type="ChEBI" id="CHEBI:33737"/>
        <dbReference type="ChEBI" id="CHEBI:33738"/>
        <dbReference type="ChEBI" id="CHEBI:57844"/>
        <dbReference type="ChEBI" id="CHEBI:57856"/>
        <dbReference type="ChEBI" id="CHEBI:59789"/>
        <dbReference type="ChEBI" id="CHEBI:74411"/>
        <dbReference type="ChEBI" id="CHEBI:74497"/>
        <dbReference type="EC" id="2.1.1.192"/>
    </reaction>
</comment>
<comment type="catalytic activity">
    <reaction evidence="1">
        <text>adenosine(37) in tRNA + 2 reduced [2Fe-2S]-[ferredoxin] + 2 S-adenosyl-L-methionine = 2-methyladenosine(37) in tRNA + 5'-deoxyadenosine + L-methionine + 2 oxidized [2Fe-2S]-[ferredoxin] + S-adenosyl-L-homocysteine</text>
        <dbReference type="Rhea" id="RHEA:43332"/>
        <dbReference type="Rhea" id="RHEA-COMP:10000"/>
        <dbReference type="Rhea" id="RHEA-COMP:10001"/>
        <dbReference type="Rhea" id="RHEA-COMP:10162"/>
        <dbReference type="Rhea" id="RHEA-COMP:10485"/>
        <dbReference type="ChEBI" id="CHEBI:17319"/>
        <dbReference type="ChEBI" id="CHEBI:33737"/>
        <dbReference type="ChEBI" id="CHEBI:33738"/>
        <dbReference type="ChEBI" id="CHEBI:57844"/>
        <dbReference type="ChEBI" id="CHEBI:57856"/>
        <dbReference type="ChEBI" id="CHEBI:59789"/>
        <dbReference type="ChEBI" id="CHEBI:74411"/>
        <dbReference type="ChEBI" id="CHEBI:74497"/>
        <dbReference type="EC" id="2.1.1.192"/>
    </reaction>
</comment>
<comment type="cofactor">
    <cofactor evidence="1">
        <name>[4Fe-4S] cluster</name>
        <dbReference type="ChEBI" id="CHEBI:49883"/>
    </cofactor>
    <text evidence="1">Binds 1 [4Fe-4S] cluster. The cluster is coordinated with 3 cysteines and an exchangeable S-adenosyl-L-methionine.</text>
</comment>
<comment type="subcellular location">
    <subcellularLocation>
        <location evidence="1">Cytoplasm</location>
    </subcellularLocation>
</comment>
<comment type="miscellaneous">
    <text evidence="1">Reaction proceeds by a ping-pong mechanism involving intermediate methylation of a conserved cysteine residue.</text>
</comment>
<comment type="similarity">
    <text evidence="1">Belongs to the radical SAM superfamily. RlmN family.</text>
</comment>
<name>RLMN_CAMHC</name>
<sequence length="358" mass="40685">MKNLLDFSLDELGELLKPKFRAKQIYEWIYHKNVDDFLQMKNLPLQMREDLANEFYIGGLNVSKCEQSVDGSKKYLFELKDGKTIESVLLPMKDEITDENGEILRHKRYTICVSSQVGCKIGCAFCLTAKGGFVRNLSAGEIVEQIRLIKKINKIPYERRINVVYMGMGEPLNNLENVAKAIKILIQNEGLAISPRRQTISTSGLSSQIKKLGEMNLGVLLAISLHAVNDELREKLMPINRAYNIASIMQAVREFPIDLRKRVMFEYLVMDGVNDSINDAKTLVRLLNGIKAKVNLIYFNPHIGSKFHRPSEENMIKFQDYLSVHGITCTIRQSKGLDISAACGQLREKNLKEKNDNA</sequence>
<accession>A7I414</accession>
<protein>
    <recommendedName>
        <fullName evidence="1">Dual-specificity RNA methyltransferase RlmN</fullName>
        <ecNumber evidence="1">2.1.1.192</ecNumber>
    </recommendedName>
    <alternativeName>
        <fullName evidence="1">23S rRNA (adenine(2503)-C(2))-methyltransferase</fullName>
    </alternativeName>
    <alternativeName>
        <fullName evidence="1">23S rRNA m2A2503 methyltransferase</fullName>
    </alternativeName>
    <alternativeName>
        <fullName evidence="1">Ribosomal RNA large subunit methyltransferase N</fullName>
    </alternativeName>
    <alternativeName>
        <fullName evidence="1">tRNA (adenine(37)-C(2))-methyltransferase</fullName>
    </alternativeName>
    <alternativeName>
        <fullName evidence="1">tRNA m2A37 methyltransferase</fullName>
    </alternativeName>
</protein>
<evidence type="ECO:0000255" key="1">
    <source>
        <dbReference type="HAMAP-Rule" id="MF_01849"/>
    </source>
</evidence>
<evidence type="ECO:0000255" key="2">
    <source>
        <dbReference type="PROSITE-ProRule" id="PRU01266"/>
    </source>
</evidence>